<gene>
    <name type="primary">mobL</name>
</gene>
<reference key="1">
    <citation type="journal article" date="1990" name="Mol. Microbiol.">
        <title>The mobilization and origin of transfer regions of a Thiobacillus ferrooxidans plasmid: relatedness to plasmids RSF1010 and pSC101.</title>
        <authorList>
            <person name="Drolet M."/>
            <person name="Zanga P."/>
            <person name="Lau P.C.K."/>
        </authorList>
    </citation>
    <scope>NUCLEOTIDE SEQUENCE [GENOMIC DNA]</scope>
    <source>
        <strain>ATCC 33020 / DSM 29468 / JCM 18981 / 11Fe</strain>
    </source>
</reference>
<feature type="chain" id="PRO_0000210850" description="Mobilization protein MobL">
    <location>
        <begin position="1"/>
        <end position="378"/>
    </location>
</feature>
<feature type="region of interest" description="Disordered" evidence="1">
    <location>
        <begin position="130"/>
        <end position="149"/>
    </location>
</feature>
<feature type="region of interest" description="Disordered" evidence="1">
    <location>
        <begin position="212"/>
        <end position="253"/>
    </location>
</feature>
<feature type="region of interest" description="Disordered" evidence="1">
    <location>
        <begin position="300"/>
        <end position="338"/>
    </location>
</feature>
<feature type="region of interest" description="Disordered" evidence="1">
    <location>
        <begin position="358"/>
        <end position="378"/>
    </location>
</feature>
<feature type="compositionally biased region" description="Basic and acidic residues" evidence="1">
    <location>
        <begin position="130"/>
        <end position="146"/>
    </location>
</feature>
<feature type="compositionally biased region" description="Basic and acidic residues" evidence="1">
    <location>
        <begin position="212"/>
        <end position="232"/>
    </location>
</feature>
<feature type="compositionally biased region" description="Basic and acidic residues" evidence="1">
    <location>
        <begin position="241"/>
        <end position="253"/>
    </location>
</feature>
<feature type="compositionally biased region" description="Basic and acidic residues" evidence="1">
    <location>
        <begin position="358"/>
        <end position="370"/>
    </location>
</feature>
<name>MOBL_ACIFI</name>
<sequence>MAIYHLSAKPISRSAGRSATGAAAYRAGVEITDERTGLVHDYTRKGGVLHSELILPGGGTADRAEFWNGVEAHHKRGDAVLVREIEISLPTELTAEQRKALAVGYARALADRYGVAADVALHAPRTVTDRELEKHPDQYHETDPKTGRRHNGNWHAHILLSACHVQPDGTLGKKAVELDPIHCQRAKIENLVDRERVRWGELANAALEHHGHAARIDHRSHAKRGIEAEPTRHLGPAAAGIERRTGEESRRRHDFEREAMERLARAQAQGVLERESRGLERSIFDLSGDMRAAFQERDRLREQQERAERERREQERAREAQRQQEKQQADKAASDQREAERILAQLLEKAPVVDRKTEKAIDGLFHDIARSRSRGRGR</sequence>
<protein>
    <recommendedName>
        <fullName>Mobilization protein MobL</fullName>
    </recommendedName>
</protein>
<keyword id="KW-0184">Conjugation</keyword>
<keyword id="KW-0499">Mobility protein</keyword>
<keyword id="KW-0614">Plasmid</keyword>
<comment type="function">
    <text>This protein is essential to promote the specific transfer of the plasmid in the presence of conjugative plasmids.</text>
</comment>
<comment type="similarity">
    <text evidence="2">Belongs to the MobA/MobL family.</text>
</comment>
<geneLocation type="plasmid">
    <name>pTF1</name>
</geneLocation>
<accession>P20085</accession>
<proteinExistence type="inferred from homology"/>
<organism>
    <name type="scientific">Acidithiobacillus ferridurans</name>
    <dbReference type="NCBI Taxonomy" id="1232575"/>
    <lineage>
        <taxon>Bacteria</taxon>
        <taxon>Pseudomonadati</taxon>
        <taxon>Pseudomonadota</taxon>
        <taxon>Acidithiobacillia</taxon>
        <taxon>Acidithiobacillales</taxon>
        <taxon>Acidithiobacillaceae</taxon>
        <taxon>Acidithiobacillus</taxon>
    </lineage>
</organism>
<dbReference type="EMBL" id="X52699">
    <property type="protein sequence ID" value="CAA36927.1"/>
    <property type="molecule type" value="Genomic_DNA"/>
</dbReference>
<dbReference type="PIR" id="S12190">
    <property type="entry name" value="S12190"/>
</dbReference>
<dbReference type="RefSeq" id="WP_215886101.1">
    <property type="nucleotide sequence ID" value="NZ_JABBHQ010000049.1"/>
</dbReference>
<dbReference type="SMR" id="P20085"/>
<dbReference type="Gene3D" id="3.30.930.30">
    <property type="match status" value="1"/>
</dbReference>
<dbReference type="InterPro" id="IPR005053">
    <property type="entry name" value="MobA_MobL"/>
</dbReference>
<dbReference type="Pfam" id="PF03389">
    <property type="entry name" value="MobA_MobL"/>
    <property type="match status" value="1"/>
</dbReference>
<evidence type="ECO:0000256" key="1">
    <source>
        <dbReference type="SAM" id="MobiDB-lite"/>
    </source>
</evidence>
<evidence type="ECO:0000305" key="2"/>